<protein>
    <recommendedName>
        <fullName evidence="1">Small ribosomal subunit protein uS9</fullName>
    </recommendedName>
    <alternativeName>
        <fullName evidence="3">30S ribosomal protein S9</fullName>
    </alternativeName>
</protein>
<organism>
    <name type="scientific">Staphylococcus aureus (strain bovine RF122 / ET3-1)</name>
    <dbReference type="NCBI Taxonomy" id="273036"/>
    <lineage>
        <taxon>Bacteria</taxon>
        <taxon>Bacillati</taxon>
        <taxon>Bacillota</taxon>
        <taxon>Bacilli</taxon>
        <taxon>Bacillales</taxon>
        <taxon>Staphylococcaceae</taxon>
        <taxon>Staphylococcus</taxon>
    </lineage>
</organism>
<comment type="similarity">
    <text evidence="1">Belongs to the universal ribosomal protein uS9 family.</text>
</comment>
<gene>
    <name evidence="1" type="primary">rpsI</name>
    <name type="ordered locus">SAB2090c</name>
</gene>
<reference key="1">
    <citation type="journal article" date="2007" name="PLoS ONE">
        <title>Molecular correlates of host specialization in Staphylococcus aureus.</title>
        <authorList>
            <person name="Herron-Olson L."/>
            <person name="Fitzgerald J.R."/>
            <person name="Musser J.M."/>
            <person name="Kapur V."/>
        </authorList>
    </citation>
    <scope>NUCLEOTIDE SEQUENCE [LARGE SCALE GENOMIC DNA]</scope>
    <source>
        <strain>bovine RF122 / ET3-1</strain>
    </source>
</reference>
<sequence length="132" mass="14830">MTLAQVEYRGTGRRKNSVARVRLVPGEGNITVNNRDVREYLPFESLILDLNQPFDVTETKGNYDVLVNVHGGGFTGQAQAIRHGIARALLEADPEYRGSLKRAGLLTRDPRMKERKKPGLKAARRSPQFSKR</sequence>
<accession>Q2YYM9</accession>
<name>RS9_STAAB</name>
<proteinExistence type="evidence at protein level"/>
<feature type="chain" id="PRO_1000051337" description="Small ribosomal subunit protein uS9">
    <location>
        <begin position="1"/>
        <end position="132"/>
    </location>
</feature>
<feature type="region of interest" description="Disordered" evidence="2">
    <location>
        <begin position="101"/>
        <end position="132"/>
    </location>
</feature>
<feature type="compositionally biased region" description="Basic residues" evidence="2">
    <location>
        <begin position="113"/>
        <end position="132"/>
    </location>
</feature>
<evidence type="ECO:0000255" key="1">
    <source>
        <dbReference type="HAMAP-Rule" id="MF_00532"/>
    </source>
</evidence>
<evidence type="ECO:0000256" key="2">
    <source>
        <dbReference type="SAM" id="MobiDB-lite"/>
    </source>
</evidence>
<evidence type="ECO:0000305" key="3"/>
<dbReference type="EMBL" id="AJ938182">
    <property type="protein sequence ID" value="CAI81779.1"/>
    <property type="molecule type" value="Genomic_DNA"/>
</dbReference>
<dbReference type="PDB" id="6FXC">
    <property type="method" value="EM"/>
    <property type="resolution" value="6.76 A"/>
    <property type="chains" value="Ai/Bi=6-132"/>
</dbReference>
<dbReference type="PDBsum" id="6FXC"/>
<dbReference type="EMDB" id="EMD-3637"/>
<dbReference type="SMR" id="Q2YYM9"/>
<dbReference type="KEGG" id="sab:SAB2090c"/>
<dbReference type="HOGENOM" id="CLU_046483_2_1_9"/>
<dbReference type="GO" id="GO:0022627">
    <property type="term" value="C:cytosolic small ribosomal subunit"/>
    <property type="evidence" value="ECO:0007669"/>
    <property type="project" value="TreeGrafter"/>
</dbReference>
<dbReference type="GO" id="GO:0003723">
    <property type="term" value="F:RNA binding"/>
    <property type="evidence" value="ECO:0007669"/>
    <property type="project" value="TreeGrafter"/>
</dbReference>
<dbReference type="GO" id="GO:0003735">
    <property type="term" value="F:structural constituent of ribosome"/>
    <property type="evidence" value="ECO:0007669"/>
    <property type="project" value="InterPro"/>
</dbReference>
<dbReference type="GO" id="GO:0006412">
    <property type="term" value="P:translation"/>
    <property type="evidence" value="ECO:0007669"/>
    <property type="project" value="UniProtKB-UniRule"/>
</dbReference>
<dbReference type="FunFam" id="3.30.230.10:FF:000001">
    <property type="entry name" value="30S ribosomal protein S9"/>
    <property type="match status" value="1"/>
</dbReference>
<dbReference type="Gene3D" id="3.30.230.10">
    <property type="match status" value="1"/>
</dbReference>
<dbReference type="HAMAP" id="MF_00532_B">
    <property type="entry name" value="Ribosomal_uS9_B"/>
    <property type="match status" value="1"/>
</dbReference>
<dbReference type="InterPro" id="IPR020568">
    <property type="entry name" value="Ribosomal_Su5_D2-typ_SF"/>
</dbReference>
<dbReference type="InterPro" id="IPR000754">
    <property type="entry name" value="Ribosomal_uS9"/>
</dbReference>
<dbReference type="InterPro" id="IPR023035">
    <property type="entry name" value="Ribosomal_uS9_bac/plastid"/>
</dbReference>
<dbReference type="InterPro" id="IPR020574">
    <property type="entry name" value="Ribosomal_uS9_CS"/>
</dbReference>
<dbReference type="InterPro" id="IPR014721">
    <property type="entry name" value="Ribsml_uS5_D2-typ_fold_subgr"/>
</dbReference>
<dbReference type="NCBIfam" id="NF001099">
    <property type="entry name" value="PRK00132.1"/>
    <property type="match status" value="1"/>
</dbReference>
<dbReference type="PANTHER" id="PTHR21569">
    <property type="entry name" value="RIBOSOMAL PROTEIN S9"/>
    <property type="match status" value="1"/>
</dbReference>
<dbReference type="PANTHER" id="PTHR21569:SF1">
    <property type="entry name" value="SMALL RIBOSOMAL SUBUNIT PROTEIN US9M"/>
    <property type="match status" value="1"/>
</dbReference>
<dbReference type="Pfam" id="PF00380">
    <property type="entry name" value="Ribosomal_S9"/>
    <property type="match status" value="1"/>
</dbReference>
<dbReference type="SUPFAM" id="SSF54211">
    <property type="entry name" value="Ribosomal protein S5 domain 2-like"/>
    <property type="match status" value="1"/>
</dbReference>
<dbReference type="PROSITE" id="PS00360">
    <property type="entry name" value="RIBOSOMAL_S9"/>
    <property type="match status" value="1"/>
</dbReference>
<keyword id="KW-0002">3D-structure</keyword>
<keyword id="KW-0687">Ribonucleoprotein</keyword>
<keyword id="KW-0689">Ribosomal protein</keyword>